<gene>
    <name evidence="1" type="primary">obg</name>
    <name type="ordered locus">XOO1622</name>
</gene>
<evidence type="ECO:0000255" key="1">
    <source>
        <dbReference type="HAMAP-Rule" id="MF_01454"/>
    </source>
</evidence>
<evidence type="ECO:0000255" key="2">
    <source>
        <dbReference type="PROSITE-ProRule" id="PRU01231"/>
    </source>
</evidence>
<evidence type="ECO:0000256" key="3">
    <source>
        <dbReference type="SAM" id="MobiDB-lite"/>
    </source>
</evidence>
<accession>Q5H2E5</accession>
<name>OBG_XANOR</name>
<protein>
    <recommendedName>
        <fullName evidence="1">GTPase Obg</fullName>
        <ecNumber evidence="1">3.6.5.-</ecNumber>
    </recommendedName>
    <alternativeName>
        <fullName evidence="1">GTP-binding protein Obg</fullName>
    </alternativeName>
</protein>
<sequence length="350" mass="37866">MKLVDEAEILVTAGHGGNGCVGFRREKFIPLGGPDGGDGGSGGSVWIVADENVNTLVDFRHERTFKAQRGENGMGRQAYGKGGEDRIIVVPVGTVVINVQTDEVIGDLTRHGDRLLVAKGGKGGLGNMHFKSSVNRAPRQSTTGEEGEERLLKLELRLLADVGLLGFPNAGKSTLIRAVSSATPKVADYPFTTLYPNLGVVSVEAYRSFVIADVPGLIEGAADGAGLGTQFLRHLQRTRLLLHLVDMAPMDGGVDGVSPADQVRTLERELERHDPQLLKKPRWLVLNKADLMFEDEARAAAETIVAELGWTAPWYLVSALGRDGTFPIMKDVMAFFDRQREDELEARNAG</sequence>
<comment type="function">
    <text evidence="1">An essential GTPase which binds GTP, GDP and possibly (p)ppGpp with moderate affinity, with high nucleotide exchange rates and a fairly low GTP hydrolysis rate. Plays a role in control of the cell cycle, stress response, ribosome biogenesis and in those bacteria that undergo differentiation, in morphogenesis control.</text>
</comment>
<comment type="cofactor">
    <cofactor evidence="1">
        <name>Mg(2+)</name>
        <dbReference type="ChEBI" id="CHEBI:18420"/>
    </cofactor>
</comment>
<comment type="subunit">
    <text evidence="1">Monomer.</text>
</comment>
<comment type="subcellular location">
    <subcellularLocation>
        <location evidence="1">Cytoplasm</location>
    </subcellularLocation>
</comment>
<comment type="similarity">
    <text evidence="1">Belongs to the TRAFAC class OBG-HflX-like GTPase superfamily. OBG GTPase family.</text>
</comment>
<reference key="1">
    <citation type="journal article" date="2005" name="Nucleic Acids Res.">
        <title>The genome sequence of Xanthomonas oryzae pathovar oryzae KACC10331, the bacterial blight pathogen of rice.</title>
        <authorList>
            <person name="Lee B.-M."/>
            <person name="Park Y.-J."/>
            <person name="Park D.-S."/>
            <person name="Kang H.-W."/>
            <person name="Kim J.-G."/>
            <person name="Song E.-S."/>
            <person name="Park I.-C."/>
            <person name="Yoon U.-H."/>
            <person name="Hahn J.-H."/>
            <person name="Koo B.-S."/>
            <person name="Lee G.-B."/>
            <person name="Kim H."/>
            <person name="Park H.-S."/>
            <person name="Yoon K.-O."/>
            <person name="Kim J.-H."/>
            <person name="Jung C.-H."/>
            <person name="Koh N.-H."/>
            <person name="Seo J.-S."/>
            <person name="Go S.-J."/>
        </authorList>
    </citation>
    <scope>NUCLEOTIDE SEQUENCE [LARGE SCALE GENOMIC DNA]</scope>
    <source>
        <strain>KACC10331 / KXO85</strain>
    </source>
</reference>
<organism>
    <name type="scientific">Xanthomonas oryzae pv. oryzae (strain KACC10331 / KXO85)</name>
    <dbReference type="NCBI Taxonomy" id="291331"/>
    <lineage>
        <taxon>Bacteria</taxon>
        <taxon>Pseudomonadati</taxon>
        <taxon>Pseudomonadota</taxon>
        <taxon>Gammaproteobacteria</taxon>
        <taxon>Lysobacterales</taxon>
        <taxon>Lysobacteraceae</taxon>
        <taxon>Xanthomonas</taxon>
    </lineage>
</organism>
<proteinExistence type="inferred from homology"/>
<keyword id="KW-0963">Cytoplasm</keyword>
<keyword id="KW-0342">GTP-binding</keyword>
<keyword id="KW-0378">Hydrolase</keyword>
<keyword id="KW-0460">Magnesium</keyword>
<keyword id="KW-0479">Metal-binding</keyword>
<keyword id="KW-0547">Nucleotide-binding</keyword>
<keyword id="KW-1185">Reference proteome</keyword>
<dbReference type="EC" id="3.6.5.-" evidence="1"/>
<dbReference type="EMBL" id="AE013598">
    <property type="protein sequence ID" value="AAW74876.1"/>
    <property type="molecule type" value="Genomic_DNA"/>
</dbReference>
<dbReference type="SMR" id="Q5H2E5"/>
<dbReference type="STRING" id="291331.XOO1622"/>
<dbReference type="KEGG" id="xoo:XOO1622"/>
<dbReference type="HOGENOM" id="CLU_011747_2_0_6"/>
<dbReference type="Proteomes" id="UP000006735">
    <property type="component" value="Chromosome"/>
</dbReference>
<dbReference type="GO" id="GO:0005737">
    <property type="term" value="C:cytoplasm"/>
    <property type="evidence" value="ECO:0007669"/>
    <property type="project" value="UniProtKB-SubCell"/>
</dbReference>
<dbReference type="GO" id="GO:0005525">
    <property type="term" value="F:GTP binding"/>
    <property type="evidence" value="ECO:0007669"/>
    <property type="project" value="UniProtKB-UniRule"/>
</dbReference>
<dbReference type="GO" id="GO:0003924">
    <property type="term" value="F:GTPase activity"/>
    <property type="evidence" value="ECO:0007669"/>
    <property type="project" value="UniProtKB-UniRule"/>
</dbReference>
<dbReference type="GO" id="GO:0000287">
    <property type="term" value="F:magnesium ion binding"/>
    <property type="evidence" value="ECO:0007669"/>
    <property type="project" value="InterPro"/>
</dbReference>
<dbReference type="GO" id="GO:0042254">
    <property type="term" value="P:ribosome biogenesis"/>
    <property type="evidence" value="ECO:0007669"/>
    <property type="project" value="UniProtKB-UniRule"/>
</dbReference>
<dbReference type="CDD" id="cd01898">
    <property type="entry name" value="Obg"/>
    <property type="match status" value="1"/>
</dbReference>
<dbReference type="FunFam" id="2.70.210.12:FF:000001">
    <property type="entry name" value="GTPase Obg"/>
    <property type="match status" value="1"/>
</dbReference>
<dbReference type="Gene3D" id="2.70.210.12">
    <property type="entry name" value="GTP1/OBG domain"/>
    <property type="match status" value="1"/>
</dbReference>
<dbReference type="Gene3D" id="3.40.50.300">
    <property type="entry name" value="P-loop containing nucleotide triphosphate hydrolases"/>
    <property type="match status" value="1"/>
</dbReference>
<dbReference type="HAMAP" id="MF_01454">
    <property type="entry name" value="GTPase_Obg"/>
    <property type="match status" value="1"/>
</dbReference>
<dbReference type="InterPro" id="IPR031167">
    <property type="entry name" value="G_OBG"/>
</dbReference>
<dbReference type="InterPro" id="IPR006073">
    <property type="entry name" value="GTP-bd"/>
</dbReference>
<dbReference type="InterPro" id="IPR014100">
    <property type="entry name" value="GTP-bd_Obg/CgtA"/>
</dbReference>
<dbReference type="InterPro" id="IPR006074">
    <property type="entry name" value="GTP1-OBG_CS"/>
</dbReference>
<dbReference type="InterPro" id="IPR006169">
    <property type="entry name" value="GTP1_OBG_dom"/>
</dbReference>
<dbReference type="InterPro" id="IPR036726">
    <property type="entry name" value="GTP1_OBG_dom_sf"/>
</dbReference>
<dbReference type="InterPro" id="IPR045086">
    <property type="entry name" value="OBG_GTPase"/>
</dbReference>
<dbReference type="InterPro" id="IPR027417">
    <property type="entry name" value="P-loop_NTPase"/>
</dbReference>
<dbReference type="NCBIfam" id="TIGR02729">
    <property type="entry name" value="Obg_CgtA"/>
    <property type="match status" value="1"/>
</dbReference>
<dbReference type="NCBIfam" id="NF008955">
    <property type="entry name" value="PRK12297.1"/>
    <property type="match status" value="1"/>
</dbReference>
<dbReference type="NCBIfam" id="NF008956">
    <property type="entry name" value="PRK12299.1"/>
    <property type="match status" value="1"/>
</dbReference>
<dbReference type="PANTHER" id="PTHR11702">
    <property type="entry name" value="DEVELOPMENTALLY REGULATED GTP-BINDING PROTEIN-RELATED"/>
    <property type="match status" value="1"/>
</dbReference>
<dbReference type="PANTHER" id="PTHR11702:SF31">
    <property type="entry name" value="MITOCHONDRIAL RIBOSOME-ASSOCIATED GTPASE 2"/>
    <property type="match status" value="1"/>
</dbReference>
<dbReference type="Pfam" id="PF01018">
    <property type="entry name" value="GTP1_OBG"/>
    <property type="match status" value="1"/>
</dbReference>
<dbReference type="Pfam" id="PF01926">
    <property type="entry name" value="MMR_HSR1"/>
    <property type="match status" value="1"/>
</dbReference>
<dbReference type="PIRSF" id="PIRSF002401">
    <property type="entry name" value="GTP_bd_Obg/CgtA"/>
    <property type="match status" value="1"/>
</dbReference>
<dbReference type="PRINTS" id="PR00326">
    <property type="entry name" value="GTP1OBG"/>
</dbReference>
<dbReference type="SUPFAM" id="SSF82051">
    <property type="entry name" value="Obg GTP-binding protein N-terminal domain"/>
    <property type="match status" value="1"/>
</dbReference>
<dbReference type="SUPFAM" id="SSF52540">
    <property type="entry name" value="P-loop containing nucleoside triphosphate hydrolases"/>
    <property type="match status" value="1"/>
</dbReference>
<dbReference type="PROSITE" id="PS51710">
    <property type="entry name" value="G_OBG"/>
    <property type="match status" value="1"/>
</dbReference>
<dbReference type="PROSITE" id="PS00905">
    <property type="entry name" value="GTP1_OBG"/>
    <property type="match status" value="1"/>
</dbReference>
<dbReference type="PROSITE" id="PS51883">
    <property type="entry name" value="OBG"/>
    <property type="match status" value="1"/>
</dbReference>
<feature type="chain" id="PRO_0000386398" description="GTPase Obg">
    <location>
        <begin position="1"/>
        <end position="350"/>
    </location>
</feature>
<feature type="domain" description="Obg" evidence="2">
    <location>
        <begin position="1"/>
        <end position="159"/>
    </location>
</feature>
<feature type="domain" description="OBG-type G" evidence="1">
    <location>
        <begin position="160"/>
        <end position="337"/>
    </location>
</feature>
<feature type="region of interest" description="Disordered" evidence="3">
    <location>
        <begin position="127"/>
        <end position="146"/>
    </location>
</feature>
<feature type="compositionally biased region" description="Polar residues" evidence="3">
    <location>
        <begin position="130"/>
        <end position="143"/>
    </location>
</feature>
<feature type="binding site" evidence="1">
    <location>
        <begin position="166"/>
        <end position="173"/>
    </location>
    <ligand>
        <name>GTP</name>
        <dbReference type="ChEBI" id="CHEBI:37565"/>
    </ligand>
</feature>
<feature type="binding site" evidence="1">
    <location>
        <position position="173"/>
    </location>
    <ligand>
        <name>Mg(2+)</name>
        <dbReference type="ChEBI" id="CHEBI:18420"/>
    </ligand>
</feature>
<feature type="binding site" evidence="1">
    <location>
        <begin position="191"/>
        <end position="195"/>
    </location>
    <ligand>
        <name>GTP</name>
        <dbReference type="ChEBI" id="CHEBI:37565"/>
    </ligand>
</feature>
<feature type="binding site" evidence="1">
    <location>
        <position position="193"/>
    </location>
    <ligand>
        <name>Mg(2+)</name>
        <dbReference type="ChEBI" id="CHEBI:18420"/>
    </ligand>
</feature>
<feature type="binding site" evidence="1">
    <location>
        <begin position="213"/>
        <end position="216"/>
    </location>
    <ligand>
        <name>GTP</name>
        <dbReference type="ChEBI" id="CHEBI:37565"/>
    </ligand>
</feature>
<feature type="binding site" evidence="1">
    <location>
        <begin position="287"/>
        <end position="290"/>
    </location>
    <ligand>
        <name>GTP</name>
        <dbReference type="ChEBI" id="CHEBI:37565"/>
    </ligand>
</feature>
<feature type="binding site" evidence="1">
    <location>
        <begin position="318"/>
        <end position="320"/>
    </location>
    <ligand>
        <name>GTP</name>
        <dbReference type="ChEBI" id="CHEBI:37565"/>
    </ligand>
</feature>